<name>PETN_CICAR</name>
<sequence>MYMDIVSLAWAALMVVFTFSLSLVVWGRSGL</sequence>
<evidence type="ECO:0000255" key="1">
    <source>
        <dbReference type="HAMAP-Rule" id="MF_00395"/>
    </source>
</evidence>
<dbReference type="EMBL" id="EU835853">
    <property type="protein sequence ID" value="ACH41069.1"/>
    <property type="molecule type" value="Genomic_DNA"/>
</dbReference>
<dbReference type="RefSeq" id="YP_002149732.1">
    <property type="nucleotide sequence ID" value="NC_011163.1"/>
</dbReference>
<dbReference type="SMR" id="B5LMM3"/>
<dbReference type="GeneID" id="6797551"/>
<dbReference type="KEGG" id="cam:6797551"/>
<dbReference type="OrthoDB" id="1366615at2759"/>
<dbReference type="Proteomes" id="UP000087171">
    <property type="component" value="Chloroplast Pltd"/>
</dbReference>
<dbReference type="GO" id="GO:0009535">
    <property type="term" value="C:chloroplast thylakoid membrane"/>
    <property type="evidence" value="ECO:0007669"/>
    <property type="project" value="UniProtKB-SubCell"/>
</dbReference>
<dbReference type="GO" id="GO:0009512">
    <property type="term" value="C:cytochrome b6f complex"/>
    <property type="evidence" value="ECO:0007669"/>
    <property type="project" value="InterPro"/>
</dbReference>
<dbReference type="GO" id="GO:0045158">
    <property type="term" value="F:electron transporter, transferring electrons within cytochrome b6/f complex of photosystem II activity"/>
    <property type="evidence" value="ECO:0007669"/>
    <property type="project" value="InterPro"/>
</dbReference>
<dbReference type="GO" id="GO:0017004">
    <property type="term" value="P:cytochrome complex assembly"/>
    <property type="evidence" value="ECO:0007669"/>
    <property type="project" value="UniProtKB-UniRule"/>
</dbReference>
<dbReference type="GO" id="GO:0015979">
    <property type="term" value="P:photosynthesis"/>
    <property type="evidence" value="ECO:0007669"/>
    <property type="project" value="UniProtKB-KW"/>
</dbReference>
<dbReference type="HAMAP" id="MF_00395">
    <property type="entry name" value="Cytb6_f_PetN"/>
    <property type="match status" value="1"/>
</dbReference>
<dbReference type="InterPro" id="IPR036143">
    <property type="entry name" value="Cytochr_b6-f_cplx_su8_sf"/>
</dbReference>
<dbReference type="InterPro" id="IPR005497">
    <property type="entry name" value="Cytochrome_b6-f_cplx_su8"/>
</dbReference>
<dbReference type="Pfam" id="PF03742">
    <property type="entry name" value="PetN"/>
    <property type="match status" value="1"/>
</dbReference>
<dbReference type="SUPFAM" id="SSF103451">
    <property type="entry name" value="PetN subunit of the cytochrome b6f complex"/>
    <property type="match status" value="1"/>
</dbReference>
<feature type="chain" id="PRO_0000355430" description="Cytochrome b6-f complex subunit 8">
    <location>
        <begin position="1"/>
        <end position="31"/>
    </location>
</feature>
<feature type="transmembrane region" description="Helical" evidence="1">
    <location>
        <begin position="5"/>
        <end position="25"/>
    </location>
</feature>
<proteinExistence type="inferred from homology"/>
<comment type="function">
    <text evidence="1">Component of the cytochrome b6-f complex, which mediates electron transfer between photosystem II (PSII) and photosystem I (PSI), cyclic electron flow around PSI, and state transitions.</text>
</comment>
<comment type="subunit">
    <text evidence="1">The 4 large subunits of the cytochrome b6-f complex are cytochrome b6, subunit IV (17 kDa polypeptide, PetD), cytochrome f and the Rieske protein, while the 4 small subunits are PetG, PetL, PetM and PetN. The complex functions as a dimer.</text>
</comment>
<comment type="subcellular location">
    <subcellularLocation>
        <location evidence="1">Plastid</location>
        <location evidence="1">Chloroplast thylakoid membrane</location>
        <topology evidence="1">Single-pass membrane protein</topology>
    </subcellularLocation>
</comment>
<comment type="similarity">
    <text evidence="1">Belongs to the PetN family.</text>
</comment>
<organism>
    <name type="scientific">Cicer arietinum</name>
    <name type="common">Chickpea</name>
    <name type="synonym">Garbanzo</name>
    <dbReference type="NCBI Taxonomy" id="3827"/>
    <lineage>
        <taxon>Eukaryota</taxon>
        <taxon>Viridiplantae</taxon>
        <taxon>Streptophyta</taxon>
        <taxon>Embryophyta</taxon>
        <taxon>Tracheophyta</taxon>
        <taxon>Spermatophyta</taxon>
        <taxon>Magnoliopsida</taxon>
        <taxon>eudicotyledons</taxon>
        <taxon>Gunneridae</taxon>
        <taxon>Pentapetalae</taxon>
        <taxon>rosids</taxon>
        <taxon>fabids</taxon>
        <taxon>Fabales</taxon>
        <taxon>Fabaceae</taxon>
        <taxon>Papilionoideae</taxon>
        <taxon>50 kb inversion clade</taxon>
        <taxon>NPAAA clade</taxon>
        <taxon>Hologalegina</taxon>
        <taxon>IRL clade</taxon>
        <taxon>Cicereae</taxon>
        <taxon>Cicer</taxon>
    </lineage>
</organism>
<keyword id="KW-0150">Chloroplast</keyword>
<keyword id="KW-0249">Electron transport</keyword>
<keyword id="KW-0472">Membrane</keyword>
<keyword id="KW-0602">Photosynthesis</keyword>
<keyword id="KW-0934">Plastid</keyword>
<keyword id="KW-1185">Reference proteome</keyword>
<keyword id="KW-0793">Thylakoid</keyword>
<keyword id="KW-0812">Transmembrane</keyword>
<keyword id="KW-1133">Transmembrane helix</keyword>
<keyword id="KW-0813">Transport</keyword>
<accession>B5LMM3</accession>
<geneLocation type="chloroplast"/>
<protein>
    <recommendedName>
        <fullName evidence="1">Cytochrome b6-f complex subunit 8</fullName>
    </recommendedName>
    <alternativeName>
        <fullName evidence="1">Cytochrome b6-f complex subunit PetN</fullName>
    </alternativeName>
    <alternativeName>
        <fullName evidence="1">Cytochrome b6-f complex subunit VIII</fullName>
    </alternativeName>
</protein>
<gene>
    <name evidence="1" type="primary">petN</name>
</gene>
<reference key="1">
    <citation type="journal article" date="2008" name="Mol. Phylogenet. Evol.">
        <title>Complete plastid genome sequence of the chickpea (Cicer arietinum) and the phylogenetic distribution of rps12 and clpP intron losses among legumes (Leguminosae).</title>
        <authorList>
            <person name="Jansen R.K."/>
            <person name="Wojciechowski M.F."/>
            <person name="Sanniyasi E."/>
            <person name="Lee S.-B."/>
            <person name="Daniell H."/>
        </authorList>
    </citation>
    <scope>NUCLEOTIDE SEQUENCE [LARGE SCALE GENOMIC DNA]</scope>
</reference>